<proteinExistence type="inferred from homology"/>
<evidence type="ECO:0000269" key="1">
    <source>
    </source>
</evidence>
<evidence type="ECO:0000305" key="2"/>
<comment type="function">
    <text evidence="1">Converts adenosylcobinamide (AdoCbi) to adenosylcobyric acid (AdoCby), an intermediate of the de novo coenzyme B12 biosynthetic route.</text>
</comment>
<comment type="catalytic activity">
    <reaction>
        <text>adenosylcob(III)inamide + H2O = (R)-1-aminopropan-2-ol + adenosylcob(III)yrate</text>
        <dbReference type="Rhea" id="RHEA:23504"/>
        <dbReference type="ChEBI" id="CHEBI:2480"/>
        <dbReference type="ChEBI" id="CHEBI:15377"/>
        <dbReference type="ChEBI" id="CHEBI:42677"/>
        <dbReference type="ChEBI" id="CHEBI:58504"/>
        <dbReference type="EC" id="3.5.1.90"/>
    </reaction>
</comment>
<comment type="pathway">
    <text>Cofactor biosynthesis; dicyanocobinamide salvage pathway.</text>
</comment>
<comment type="similarity">
    <text evidence="2">Belongs to the CbiZ family.</text>
</comment>
<gene>
    <name type="primary">cbiZ</name>
    <name type="ordered locus">MM_0173</name>
</gene>
<feature type="chain" id="PRO_0000220407" description="Adenosylcobinamide amidohydrolase">
    <location>
        <begin position="1"/>
        <end position="200"/>
    </location>
</feature>
<organism>
    <name type="scientific">Methanosarcina mazei (strain ATCC BAA-159 / DSM 3647 / Goe1 / Go1 / JCM 11833 / OCM 88)</name>
    <name type="common">Methanosarcina frisia</name>
    <dbReference type="NCBI Taxonomy" id="192952"/>
    <lineage>
        <taxon>Archaea</taxon>
        <taxon>Methanobacteriati</taxon>
        <taxon>Methanobacteriota</taxon>
        <taxon>Stenosarchaea group</taxon>
        <taxon>Methanomicrobia</taxon>
        <taxon>Methanosarcinales</taxon>
        <taxon>Methanosarcinaceae</taxon>
        <taxon>Methanosarcina</taxon>
    </lineage>
</organism>
<sequence>MQYHIKDQTLIIKGDFEAVSTGLNGGRARVEYIFNKQVPRTFNPPSPEEFIREEARKDGIETASLGLLTAVNMEYLQVIEDDYMTAFITAGVSNCSEFRAKAGTINIILVSKARLSETALFGAIITATEAKGLALLEKGYNFLGTNTDAVIVAYETCSDSGPKSKTNQEIPYAGSSTEFGKKITEAVIKGIKAGLELRGE</sequence>
<accession>Q8Q0G3</accession>
<name>CBIZ_METMA</name>
<keyword id="KW-0378">Hydrolase</keyword>
<reference key="1">
    <citation type="journal article" date="2002" name="J. Mol. Microbiol. Biotechnol.">
        <title>The genome of Methanosarcina mazei: evidence for lateral gene transfer between Bacteria and Archaea.</title>
        <authorList>
            <person name="Deppenmeier U."/>
            <person name="Johann A."/>
            <person name="Hartsch T."/>
            <person name="Merkl R."/>
            <person name="Schmitz R.A."/>
            <person name="Martinez-Arias R."/>
            <person name="Henne A."/>
            <person name="Wiezer A."/>
            <person name="Baeumer S."/>
            <person name="Jacobi C."/>
            <person name="Brueggemann H."/>
            <person name="Lienard T."/>
            <person name="Christmann A."/>
            <person name="Boemecke M."/>
            <person name="Steckel S."/>
            <person name="Bhattacharyya A."/>
            <person name="Lykidis A."/>
            <person name="Overbeek R."/>
            <person name="Klenk H.-P."/>
            <person name="Gunsalus R.P."/>
            <person name="Fritz H.-J."/>
            <person name="Gottschalk G."/>
        </authorList>
    </citation>
    <scope>NUCLEOTIDE SEQUENCE [LARGE SCALE GENOMIC DNA]</scope>
    <source>
        <strain>ATCC BAA-159 / DSM 3647 / Goe1 / Go1 / JCM 11833 / OCM 88</strain>
    </source>
</reference>
<reference key="2">
    <citation type="journal article" date="2004" name="Proc. Natl. Acad. Sci. U.S.A.">
        <title>CbiZ, an amidohydrolase enzyme required for salvaging the coenzyme B12 precursor cobinamide in archaea.</title>
        <authorList>
            <person name="Woodson J.D."/>
            <person name="Escalante-Semerena J.C."/>
        </authorList>
    </citation>
    <scope>FUNCTION</scope>
    <source>
        <strain>ATCC BAA-159 / DSM 3647 / Goe1 / Go1 / JCM 11833 / OCM 88</strain>
    </source>
</reference>
<dbReference type="EC" id="3.5.1.90"/>
<dbReference type="EMBL" id="AE008384">
    <property type="protein sequence ID" value="AAM29869.1"/>
    <property type="molecule type" value="Genomic_DNA"/>
</dbReference>
<dbReference type="RefSeq" id="WP_011032127.1">
    <property type="nucleotide sequence ID" value="NC_003901.1"/>
</dbReference>
<dbReference type="GeneID" id="82159158"/>
<dbReference type="KEGG" id="mma:MM_0173"/>
<dbReference type="PATRIC" id="fig|192952.21.peg.207"/>
<dbReference type="eggNOG" id="arCOG01870">
    <property type="taxonomic scope" value="Archaea"/>
</dbReference>
<dbReference type="HOGENOM" id="CLU_077662_1_0_2"/>
<dbReference type="BioCyc" id="MetaCyc:MONOMER-14880"/>
<dbReference type="BRENDA" id="3.5.1.90">
    <property type="organism ID" value="3270"/>
</dbReference>
<dbReference type="UniPathway" id="UPA00297"/>
<dbReference type="Proteomes" id="UP000000595">
    <property type="component" value="Chromosome"/>
</dbReference>
<dbReference type="GO" id="GO:0043756">
    <property type="term" value="F:adenosylcobinamide hydrolase activity"/>
    <property type="evidence" value="ECO:0007669"/>
    <property type="project" value="UniProtKB-EC"/>
</dbReference>
<dbReference type="InterPro" id="IPR002808">
    <property type="entry name" value="AdoCbi_amidolase"/>
</dbReference>
<dbReference type="InterPro" id="IPR052209">
    <property type="entry name" value="CbiZ"/>
</dbReference>
<dbReference type="PANTHER" id="PTHR35336">
    <property type="entry name" value="ADENOSYLCOBINAMIDE AMIDOHYDROLASE"/>
    <property type="match status" value="1"/>
</dbReference>
<dbReference type="PANTHER" id="PTHR35336:SF5">
    <property type="entry name" value="ADENOSYLCOBINAMIDE AMIDOHYDROLASE"/>
    <property type="match status" value="1"/>
</dbReference>
<dbReference type="Pfam" id="PF01955">
    <property type="entry name" value="CbiZ"/>
    <property type="match status" value="1"/>
</dbReference>
<protein>
    <recommendedName>
        <fullName>Adenosylcobinamide amidohydrolase</fullName>
        <shortName>AdoCbi hydrolase</shortName>
        <ecNumber>3.5.1.90</ecNumber>
    </recommendedName>
</protein>